<protein>
    <recommendedName>
        <fullName evidence="1">Small ribosomal subunit protein uS19</fullName>
    </recommendedName>
    <alternativeName>
        <fullName evidence="2">30S ribosomal protein S19</fullName>
    </alternativeName>
</protein>
<sequence length="93" mass="10750">MGRSLKKGPFVDEHLMKKVEAQANDEKKKVIKTWSRRSTIFPSFIGYTIAVYDGRKHVPVYIQEDMVGHKLGEFAPTRTYKGHAADDKKTRRK</sequence>
<keyword id="KW-0687">Ribonucleoprotein</keyword>
<keyword id="KW-0689">Ribosomal protein</keyword>
<keyword id="KW-0694">RNA-binding</keyword>
<keyword id="KW-0699">rRNA-binding</keyword>
<organism>
    <name type="scientific">Streptococcus suis (strain 98HAH33)</name>
    <dbReference type="NCBI Taxonomy" id="391296"/>
    <lineage>
        <taxon>Bacteria</taxon>
        <taxon>Bacillati</taxon>
        <taxon>Bacillota</taxon>
        <taxon>Bacilli</taxon>
        <taxon>Lactobacillales</taxon>
        <taxon>Streptococcaceae</taxon>
        <taxon>Streptococcus</taxon>
    </lineage>
</organism>
<proteinExistence type="inferred from homology"/>
<gene>
    <name evidence="1" type="primary">rpsS</name>
    <name type="ordered locus">SSU98_0076</name>
</gene>
<feature type="chain" id="PRO_0000354303" description="Small ribosomal subunit protein uS19">
    <location>
        <begin position="1"/>
        <end position="93"/>
    </location>
</feature>
<accession>A4VYP7</accession>
<reference key="1">
    <citation type="journal article" date="2007" name="PLoS ONE">
        <title>A glimpse of streptococcal toxic shock syndrome from comparative genomics of S. suis 2 Chinese isolates.</title>
        <authorList>
            <person name="Chen C."/>
            <person name="Tang J."/>
            <person name="Dong W."/>
            <person name="Wang C."/>
            <person name="Feng Y."/>
            <person name="Wang J."/>
            <person name="Zheng F."/>
            <person name="Pan X."/>
            <person name="Liu D."/>
            <person name="Li M."/>
            <person name="Song Y."/>
            <person name="Zhu X."/>
            <person name="Sun H."/>
            <person name="Feng T."/>
            <person name="Guo Z."/>
            <person name="Ju A."/>
            <person name="Ge J."/>
            <person name="Dong Y."/>
            <person name="Sun W."/>
            <person name="Jiang Y."/>
            <person name="Wang J."/>
            <person name="Yan J."/>
            <person name="Yang H."/>
            <person name="Wang X."/>
            <person name="Gao G.F."/>
            <person name="Yang R."/>
            <person name="Wang J."/>
            <person name="Yu J."/>
        </authorList>
    </citation>
    <scope>NUCLEOTIDE SEQUENCE [LARGE SCALE GENOMIC DNA]</scope>
    <source>
        <strain>98HAH33</strain>
    </source>
</reference>
<dbReference type="EMBL" id="CP000408">
    <property type="protein sequence ID" value="ABP91236.1"/>
    <property type="status" value="ALT_INIT"/>
    <property type="molecule type" value="Genomic_DNA"/>
</dbReference>
<dbReference type="SMR" id="A4VYP7"/>
<dbReference type="KEGG" id="ssv:SSU98_0076"/>
<dbReference type="HOGENOM" id="CLU_144911_0_0_9"/>
<dbReference type="GO" id="GO:0005737">
    <property type="term" value="C:cytoplasm"/>
    <property type="evidence" value="ECO:0007669"/>
    <property type="project" value="UniProtKB-ARBA"/>
</dbReference>
<dbReference type="GO" id="GO:0015935">
    <property type="term" value="C:small ribosomal subunit"/>
    <property type="evidence" value="ECO:0007669"/>
    <property type="project" value="InterPro"/>
</dbReference>
<dbReference type="GO" id="GO:0019843">
    <property type="term" value="F:rRNA binding"/>
    <property type="evidence" value="ECO:0007669"/>
    <property type="project" value="UniProtKB-UniRule"/>
</dbReference>
<dbReference type="GO" id="GO:0003735">
    <property type="term" value="F:structural constituent of ribosome"/>
    <property type="evidence" value="ECO:0007669"/>
    <property type="project" value="InterPro"/>
</dbReference>
<dbReference type="GO" id="GO:0000028">
    <property type="term" value="P:ribosomal small subunit assembly"/>
    <property type="evidence" value="ECO:0007669"/>
    <property type="project" value="TreeGrafter"/>
</dbReference>
<dbReference type="GO" id="GO:0006412">
    <property type="term" value="P:translation"/>
    <property type="evidence" value="ECO:0007669"/>
    <property type="project" value="UniProtKB-UniRule"/>
</dbReference>
<dbReference type="FunFam" id="3.30.860.10:FF:000001">
    <property type="entry name" value="30S ribosomal protein S19"/>
    <property type="match status" value="1"/>
</dbReference>
<dbReference type="Gene3D" id="3.30.860.10">
    <property type="entry name" value="30s Ribosomal Protein S19, Chain A"/>
    <property type="match status" value="1"/>
</dbReference>
<dbReference type="HAMAP" id="MF_00531">
    <property type="entry name" value="Ribosomal_uS19"/>
    <property type="match status" value="1"/>
</dbReference>
<dbReference type="InterPro" id="IPR002222">
    <property type="entry name" value="Ribosomal_uS19"/>
</dbReference>
<dbReference type="InterPro" id="IPR005732">
    <property type="entry name" value="Ribosomal_uS19_bac-type"/>
</dbReference>
<dbReference type="InterPro" id="IPR020934">
    <property type="entry name" value="Ribosomal_uS19_CS"/>
</dbReference>
<dbReference type="InterPro" id="IPR023575">
    <property type="entry name" value="Ribosomal_uS19_SF"/>
</dbReference>
<dbReference type="NCBIfam" id="TIGR01050">
    <property type="entry name" value="rpsS_bact"/>
    <property type="match status" value="1"/>
</dbReference>
<dbReference type="PANTHER" id="PTHR11880">
    <property type="entry name" value="RIBOSOMAL PROTEIN S19P FAMILY MEMBER"/>
    <property type="match status" value="1"/>
</dbReference>
<dbReference type="PANTHER" id="PTHR11880:SF8">
    <property type="entry name" value="SMALL RIBOSOMAL SUBUNIT PROTEIN US19M"/>
    <property type="match status" value="1"/>
</dbReference>
<dbReference type="Pfam" id="PF00203">
    <property type="entry name" value="Ribosomal_S19"/>
    <property type="match status" value="1"/>
</dbReference>
<dbReference type="PIRSF" id="PIRSF002144">
    <property type="entry name" value="Ribosomal_S19"/>
    <property type="match status" value="1"/>
</dbReference>
<dbReference type="PRINTS" id="PR00975">
    <property type="entry name" value="RIBOSOMALS19"/>
</dbReference>
<dbReference type="SUPFAM" id="SSF54570">
    <property type="entry name" value="Ribosomal protein S19"/>
    <property type="match status" value="1"/>
</dbReference>
<dbReference type="PROSITE" id="PS00323">
    <property type="entry name" value="RIBOSOMAL_S19"/>
    <property type="match status" value="1"/>
</dbReference>
<evidence type="ECO:0000255" key="1">
    <source>
        <dbReference type="HAMAP-Rule" id="MF_00531"/>
    </source>
</evidence>
<evidence type="ECO:0000305" key="2"/>
<name>RS19_STRS2</name>
<comment type="function">
    <text evidence="1">Protein S19 forms a complex with S13 that binds strongly to the 16S ribosomal RNA.</text>
</comment>
<comment type="similarity">
    <text evidence="1">Belongs to the universal ribosomal protein uS19 family.</text>
</comment>
<comment type="sequence caution" evidence="2">
    <conflict type="erroneous initiation">
        <sequence resource="EMBL-CDS" id="ABP91236"/>
    </conflict>
</comment>